<feature type="chain" id="PRO_1000204789" description="Potassium-transporting ATPase potassium-binding subunit">
    <location>
        <begin position="1"/>
        <end position="561"/>
    </location>
</feature>
<feature type="transmembrane region" description="Helical" evidence="1">
    <location>
        <begin position="5"/>
        <end position="25"/>
    </location>
</feature>
<feature type="transmembrane region" description="Helical" evidence="1">
    <location>
        <begin position="60"/>
        <end position="80"/>
    </location>
</feature>
<feature type="transmembrane region" description="Helical" evidence="1">
    <location>
        <begin position="86"/>
        <end position="106"/>
    </location>
</feature>
<feature type="transmembrane region" description="Helical" evidence="1">
    <location>
        <begin position="130"/>
        <end position="150"/>
    </location>
</feature>
<feature type="transmembrane region" description="Helical" evidence="1">
    <location>
        <begin position="177"/>
        <end position="197"/>
    </location>
</feature>
<feature type="transmembrane region" description="Helical" evidence="1">
    <location>
        <begin position="247"/>
        <end position="267"/>
    </location>
</feature>
<feature type="transmembrane region" description="Helical" evidence="1">
    <location>
        <begin position="281"/>
        <end position="301"/>
    </location>
</feature>
<feature type="transmembrane region" description="Helical" evidence="1">
    <location>
        <begin position="324"/>
        <end position="344"/>
    </location>
</feature>
<feature type="transmembrane region" description="Helical" evidence="1">
    <location>
        <begin position="376"/>
        <end position="396"/>
    </location>
</feature>
<feature type="transmembrane region" description="Helical" evidence="1">
    <location>
        <begin position="415"/>
        <end position="435"/>
    </location>
</feature>
<feature type="transmembrane region" description="Helical" evidence="1">
    <location>
        <begin position="491"/>
        <end position="511"/>
    </location>
</feature>
<feature type="transmembrane region" description="Helical" evidence="1">
    <location>
        <begin position="533"/>
        <end position="553"/>
    </location>
</feature>
<proteinExistence type="inferred from homology"/>
<gene>
    <name evidence="1" type="primary">kdpA</name>
    <name type="ordered locus">RER_37260</name>
</gene>
<comment type="function">
    <text evidence="1">Part of the high-affinity ATP-driven potassium transport (or Kdp) system, which catalyzes the hydrolysis of ATP coupled with the electrogenic transport of potassium into the cytoplasm. This subunit binds the extracellular potassium ions and delivers the ions to the membrane domain of KdpB through an intramembrane tunnel.</text>
</comment>
<comment type="subunit">
    <text evidence="1">The system is composed of three essential subunits: KdpA, KdpB and KdpC.</text>
</comment>
<comment type="subcellular location">
    <subcellularLocation>
        <location evidence="1">Cell membrane</location>
        <topology evidence="1">Multi-pass membrane protein</topology>
    </subcellularLocation>
</comment>
<comment type="similarity">
    <text evidence="1">Belongs to the KdpA family.</text>
</comment>
<organism>
    <name type="scientific">Rhodococcus erythropolis (strain PR4 / NBRC 100887)</name>
    <dbReference type="NCBI Taxonomy" id="234621"/>
    <lineage>
        <taxon>Bacteria</taxon>
        <taxon>Bacillati</taxon>
        <taxon>Actinomycetota</taxon>
        <taxon>Actinomycetes</taxon>
        <taxon>Mycobacteriales</taxon>
        <taxon>Nocardiaceae</taxon>
        <taxon>Rhodococcus</taxon>
        <taxon>Rhodococcus erythropolis group</taxon>
    </lineage>
</organism>
<reference key="1">
    <citation type="submission" date="2005-03" db="EMBL/GenBank/DDBJ databases">
        <title>Comparison of the complete genome sequences of Rhodococcus erythropolis PR4 and Rhodococcus opacus B4.</title>
        <authorList>
            <person name="Takarada H."/>
            <person name="Sekine M."/>
            <person name="Hosoyama A."/>
            <person name="Yamada R."/>
            <person name="Fujisawa T."/>
            <person name="Omata S."/>
            <person name="Shimizu A."/>
            <person name="Tsukatani N."/>
            <person name="Tanikawa S."/>
            <person name="Fujita N."/>
            <person name="Harayama S."/>
        </authorList>
    </citation>
    <scope>NUCLEOTIDE SEQUENCE [LARGE SCALE GENOMIC DNA]</scope>
    <source>
        <strain>PR4 / NBRC 100887</strain>
    </source>
</reference>
<dbReference type="EMBL" id="AP008957">
    <property type="protein sequence ID" value="BAH34434.1"/>
    <property type="molecule type" value="Genomic_DNA"/>
</dbReference>
<dbReference type="RefSeq" id="WP_020908186.1">
    <property type="nucleotide sequence ID" value="NC_012490.1"/>
</dbReference>
<dbReference type="SMR" id="C1A1E9"/>
<dbReference type="GeneID" id="57486366"/>
<dbReference type="KEGG" id="rer:RER_37260"/>
<dbReference type="eggNOG" id="COG2060">
    <property type="taxonomic scope" value="Bacteria"/>
</dbReference>
<dbReference type="HOGENOM" id="CLU_018614_3_0_11"/>
<dbReference type="Proteomes" id="UP000002204">
    <property type="component" value="Chromosome"/>
</dbReference>
<dbReference type="GO" id="GO:0005886">
    <property type="term" value="C:plasma membrane"/>
    <property type="evidence" value="ECO:0007669"/>
    <property type="project" value="UniProtKB-SubCell"/>
</dbReference>
<dbReference type="GO" id="GO:0008556">
    <property type="term" value="F:P-type potassium transmembrane transporter activity"/>
    <property type="evidence" value="ECO:0007669"/>
    <property type="project" value="InterPro"/>
</dbReference>
<dbReference type="GO" id="GO:0030955">
    <property type="term" value="F:potassium ion binding"/>
    <property type="evidence" value="ECO:0007669"/>
    <property type="project" value="UniProtKB-UniRule"/>
</dbReference>
<dbReference type="HAMAP" id="MF_00275">
    <property type="entry name" value="KdpA"/>
    <property type="match status" value="1"/>
</dbReference>
<dbReference type="InterPro" id="IPR004623">
    <property type="entry name" value="KdpA"/>
</dbReference>
<dbReference type="NCBIfam" id="TIGR00680">
    <property type="entry name" value="kdpA"/>
    <property type="match status" value="1"/>
</dbReference>
<dbReference type="PANTHER" id="PTHR30607">
    <property type="entry name" value="POTASSIUM-TRANSPORTING ATPASE A CHAIN"/>
    <property type="match status" value="1"/>
</dbReference>
<dbReference type="PANTHER" id="PTHR30607:SF2">
    <property type="entry name" value="POTASSIUM-TRANSPORTING ATPASE POTASSIUM-BINDING SUBUNIT"/>
    <property type="match status" value="1"/>
</dbReference>
<dbReference type="Pfam" id="PF03814">
    <property type="entry name" value="KdpA"/>
    <property type="match status" value="1"/>
</dbReference>
<dbReference type="PIRSF" id="PIRSF001294">
    <property type="entry name" value="K_ATPaseA"/>
    <property type="match status" value="1"/>
</dbReference>
<name>KDPA_RHOE4</name>
<accession>C1A1E9</accession>
<protein>
    <recommendedName>
        <fullName evidence="1">Potassium-transporting ATPase potassium-binding subunit</fullName>
    </recommendedName>
    <alternativeName>
        <fullName evidence="1">ATP phosphohydrolase [potassium-transporting] A chain</fullName>
    </alternativeName>
    <alternativeName>
        <fullName evidence="1">Potassium-binding and translocating subunit A</fullName>
    </alternativeName>
    <alternativeName>
        <fullName evidence="1">Potassium-translocating ATPase A chain</fullName>
    </alternativeName>
</protein>
<keyword id="KW-1003">Cell membrane</keyword>
<keyword id="KW-0406">Ion transport</keyword>
<keyword id="KW-0472">Membrane</keyword>
<keyword id="KW-0630">Potassium</keyword>
<keyword id="KW-0633">Potassium transport</keyword>
<keyword id="KW-0812">Transmembrane</keyword>
<keyword id="KW-1133">Transmembrane helix</keyword>
<keyword id="KW-0813">Transport</keyword>
<evidence type="ECO:0000255" key="1">
    <source>
        <dbReference type="HAMAP-Rule" id="MF_00275"/>
    </source>
</evidence>
<sequence length="561" mass="57487">MSPALAAGLQIAFVLAVLAIAYVPVGDYMARVYSSTRDLRVESVIYRVGRIDSRAEQTWYGYAASVLGFSLASALFLYFLQRIQGVLPLSDGLSGVSPAVAFNTAISFVANTNWQSYTPETTMSNFVQPVGLAVQNFVSAAVGMAVAIALVRGFIRVARGGEIGNFWVDLTRGSLRILLPFSFVIALILLSQGVIQSFHSGFASTGLDGNAVTNALAPVASQEAIKELGTNGGGILAANSAHPFENPTPLSNIVEILAILLIPVCLTRTFGTLVGDRRQGLTLLAVMGILWSGLLAVTLAAESGARGVAATAAGSMMEGKEVRFGIPGSALFAVATTGTSTGAVNSAHDSMSPLGGGAVLLNMLLGEIAPGGVGTGLYGILVLALIAVFVGGLLVGRTPEYLGKKLGRREITLAALSILVMPALVLIGTAITVILGSTTGYQGNGGDPGTPGSIHGFSEVLYAFASASNNNGSAFGGLTVTSDWFQSSLGICMLLGRFLPIIFVLALAGALASQKKVAPTAGTLPTSGPMFTGLLTGTVVLVAALTFFPALALGPLAEALQ</sequence>